<evidence type="ECO:0000256" key="1">
    <source>
        <dbReference type="SAM" id="MobiDB-lite"/>
    </source>
</evidence>
<evidence type="ECO:0000269" key="2">
    <source>
    </source>
</evidence>
<evidence type="ECO:0000269" key="3">
    <source>
    </source>
</evidence>
<evidence type="ECO:0000269" key="4">
    <source>
    </source>
</evidence>
<evidence type="ECO:0000269" key="5">
    <source>
    </source>
</evidence>
<evidence type="ECO:0000269" key="6">
    <source>
    </source>
</evidence>
<evidence type="ECO:0000269" key="7">
    <source>
    </source>
</evidence>
<evidence type="ECO:0000269" key="8">
    <source>
    </source>
</evidence>
<evidence type="ECO:0000269" key="9">
    <source>
    </source>
</evidence>
<evidence type="ECO:0000269" key="10">
    <source>
    </source>
</evidence>
<evidence type="ECO:0000269" key="11">
    <source>
    </source>
</evidence>
<evidence type="ECO:0000269" key="12">
    <source>
    </source>
</evidence>
<evidence type="ECO:0000269" key="13">
    <source>
    </source>
</evidence>
<evidence type="ECO:0000269" key="14">
    <source>
    </source>
</evidence>
<evidence type="ECO:0000269" key="15">
    <source>
    </source>
</evidence>
<evidence type="ECO:0000269" key="16">
    <source>
    </source>
</evidence>
<evidence type="ECO:0000305" key="17"/>
<proteinExistence type="evidence at protein level"/>
<comment type="function">
    <text evidence="2 6 7 10 11 13">Involved in the control of the cell cycle at the G1/S (start) transition. Activates the G1/S phase transition in response to cytokinin hormone signal, but declines in response to sucrose starvation leading to G1 arrest. Involved in the induction of mitotic cell division. Plays an important role in the switch from cell proliferation to the final stages of differentiation during plant development. May not be involved in the activation of cell cycle in the root apical meristem (RAM) in the early phase of seed germination. Promotes divisions in the guard cells (GCs) after the guard mother cells (GMC) symmetric division (PubMed:24687979).</text>
</comment>
<comment type="subunit">
    <text evidence="4 8 11 12 16">Interacts with the C-terminal domain of CDKA-1. Interacts with KRP1/ICK1. Interacts with KRP6 (PubMed:23617622).</text>
</comment>
<comment type="interaction">
    <interactant intactId="EBI-1253610">
        <id>P42753</id>
    </interactant>
    <interactant intactId="EBI-371713">
        <id>P24100</id>
        <label>CDKA-1</label>
    </interactant>
    <organismsDiffer>false</organismsDiffer>
    <experiments>5</experiments>
</comment>
<comment type="tissue specificity">
    <text evidence="2 7 14">Highly expressed in roots and at lower levels in leaves and flowers. Expressed in vegetative shoot meristem and inflorescence.</text>
</comment>
<comment type="developmental stage">
    <text evidence="2 15">Expressed 2 hours before the S phase and remains constant therafter.</text>
</comment>
<comment type="induction">
    <text evidence="2 3 5 9 14">By cytokinin. Induction by cytokinin is blocked by auxin, but not by cycloheximide. Induced by sucrose and glucose. Induced by 24-epi-brassinolide. Down-regulated by sucrose starvation.</text>
</comment>
<comment type="PTM">
    <text evidence="9 11">Phosphorylated.</text>
</comment>
<comment type="miscellaneous">
    <text>Plants overexpressing CYCD3-1 show extensive leaf curling, disorganized meristems, increased leaf number, late flowering and delayed senescence. CYCD3-1 is a highly unstable protein whose proteolysis is mediated by a proteasome-dependent pathway, and whose levels are highly dependent on the rate of protein synthesis.</text>
</comment>
<comment type="similarity">
    <text evidence="17">Belongs to the cyclin family. Cyclin D subfamily.</text>
</comment>
<dbReference type="EMBL" id="X83371">
    <property type="protein sequence ID" value="CAA58287.1"/>
    <property type="molecule type" value="mRNA"/>
</dbReference>
<dbReference type="EMBL" id="AL021961">
    <property type="protein sequence ID" value="CAA17556.1"/>
    <property type="molecule type" value="Genomic_DNA"/>
</dbReference>
<dbReference type="EMBL" id="AL161584">
    <property type="protein sequence ID" value="CAB80133.1"/>
    <property type="molecule type" value="Genomic_DNA"/>
</dbReference>
<dbReference type="EMBL" id="CP002687">
    <property type="protein sequence ID" value="AEE86335.1"/>
    <property type="molecule type" value="Genomic_DNA"/>
</dbReference>
<dbReference type="EMBL" id="AK221712">
    <property type="protein sequence ID" value="BAD95437.1"/>
    <property type="molecule type" value="mRNA"/>
</dbReference>
<dbReference type="PIR" id="T05420">
    <property type="entry name" value="T05420"/>
</dbReference>
<dbReference type="RefSeq" id="NP_195142.1">
    <property type="nucleotide sequence ID" value="NM_119579.3"/>
</dbReference>
<dbReference type="SMR" id="P42753"/>
<dbReference type="BioGRID" id="14846">
    <property type="interactions" value="14"/>
</dbReference>
<dbReference type="ELM" id="P42753"/>
<dbReference type="FunCoup" id="P42753">
    <property type="interactions" value="1080"/>
</dbReference>
<dbReference type="IntAct" id="P42753">
    <property type="interactions" value="9"/>
</dbReference>
<dbReference type="STRING" id="3702.P42753"/>
<dbReference type="iPTMnet" id="P42753"/>
<dbReference type="PaxDb" id="3702-AT4G34160.1"/>
<dbReference type="EnsemblPlants" id="AT4G34160.1">
    <property type="protein sequence ID" value="AT4G34160.1"/>
    <property type="gene ID" value="AT4G34160"/>
</dbReference>
<dbReference type="GeneID" id="829564"/>
<dbReference type="Gramene" id="AT4G34160.1">
    <property type="protein sequence ID" value="AT4G34160.1"/>
    <property type="gene ID" value="AT4G34160"/>
</dbReference>
<dbReference type="KEGG" id="ath:AT4G34160"/>
<dbReference type="Araport" id="AT4G34160"/>
<dbReference type="TAIR" id="AT4G34160">
    <property type="gene designation" value="CYCD3"/>
</dbReference>
<dbReference type="eggNOG" id="KOG0656">
    <property type="taxonomic scope" value="Eukaryota"/>
</dbReference>
<dbReference type="HOGENOM" id="CLU_048040_0_0_1"/>
<dbReference type="InParanoid" id="P42753"/>
<dbReference type="OMA" id="MIGLENH"/>
<dbReference type="OrthoDB" id="5590282at2759"/>
<dbReference type="PhylomeDB" id="P42753"/>
<dbReference type="PRO" id="PR:P42753"/>
<dbReference type="Proteomes" id="UP000006548">
    <property type="component" value="Chromosome 4"/>
</dbReference>
<dbReference type="ExpressionAtlas" id="P42753">
    <property type="expression patterns" value="baseline and differential"/>
</dbReference>
<dbReference type="GO" id="GO:0005634">
    <property type="term" value="C:nucleus"/>
    <property type="evidence" value="ECO:0007005"/>
    <property type="project" value="TAIR"/>
</dbReference>
<dbReference type="GO" id="GO:0051301">
    <property type="term" value="P:cell division"/>
    <property type="evidence" value="ECO:0007669"/>
    <property type="project" value="UniProtKB-KW"/>
</dbReference>
<dbReference type="GO" id="GO:0000082">
    <property type="term" value="P:G1/S transition of mitotic cell cycle"/>
    <property type="evidence" value="ECO:0000315"/>
    <property type="project" value="TAIR"/>
</dbReference>
<dbReference type="GO" id="GO:0010444">
    <property type="term" value="P:guard mother cell differentiation"/>
    <property type="evidence" value="ECO:0000315"/>
    <property type="project" value="UniProtKB"/>
</dbReference>
<dbReference type="GO" id="GO:0009735">
    <property type="term" value="P:response to cytokinin"/>
    <property type="evidence" value="ECO:0000315"/>
    <property type="project" value="TAIR"/>
</dbReference>
<dbReference type="GO" id="GO:0009744">
    <property type="term" value="P:response to sucrose"/>
    <property type="evidence" value="ECO:0000270"/>
    <property type="project" value="TAIR"/>
</dbReference>
<dbReference type="GO" id="GO:0048316">
    <property type="term" value="P:seed development"/>
    <property type="evidence" value="ECO:0000316"/>
    <property type="project" value="TAIR"/>
</dbReference>
<dbReference type="CDD" id="cd20543">
    <property type="entry name" value="CYCLIN_AtCycD-like_rpt1"/>
    <property type="match status" value="1"/>
</dbReference>
<dbReference type="CDD" id="cd20544">
    <property type="entry name" value="CYCLIN_AtCycD-like_rpt2"/>
    <property type="match status" value="1"/>
</dbReference>
<dbReference type="FunFam" id="1.10.472.10:FF:000202">
    <property type="entry name" value="BnaA03g50910D protein"/>
    <property type="match status" value="1"/>
</dbReference>
<dbReference type="FunFam" id="1.10.472.10:FF:000070">
    <property type="entry name" value="CYCLIN D32"/>
    <property type="match status" value="1"/>
</dbReference>
<dbReference type="Gene3D" id="1.10.472.10">
    <property type="entry name" value="Cyclin-like"/>
    <property type="match status" value="2"/>
</dbReference>
<dbReference type="InterPro" id="IPR039361">
    <property type="entry name" value="Cyclin"/>
</dbReference>
<dbReference type="InterPro" id="IPR013763">
    <property type="entry name" value="Cyclin-like_dom"/>
</dbReference>
<dbReference type="InterPro" id="IPR036915">
    <property type="entry name" value="Cyclin-like_sf"/>
</dbReference>
<dbReference type="InterPro" id="IPR004367">
    <property type="entry name" value="Cyclin_C-dom"/>
</dbReference>
<dbReference type="InterPro" id="IPR006671">
    <property type="entry name" value="Cyclin_N"/>
</dbReference>
<dbReference type="InterPro" id="IPR048258">
    <property type="entry name" value="Cyclins_cyclin-box"/>
</dbReference>
<dbReference type="PANTHER" id="PTHR10177">
    <property type="entry name" value="CYCLINS"/>
    <property type="match status" value="1"/>
</dbReference>
<dbReference type="Pfam" id="PF02984">
    <property type="entry name" value="Cyclin_C"/>
    <property type="match status" value="1"/>
</dbReference>
<dbReference type="Pfam" id="PF00134">
    <property type="entry name" value="Cyclin_N"/>
    <property type="match status" value="1"/>
</dbReference>
<dbReference type="SMART" id="SM00385">
    <property type="entry name" value="CYCLIN"/>
    <property type="match status" value="2"/>
</dbReference>
<dbReference type="SMART" id="SM01332">
    <property type="entry name" value="Cyclin_C"/>
    <property type="match status" value="1"/>
</dbReference>
<dbReference type="SUPFAM" id="SSF47954">
    <property type="entry name" value="Cyclin-like"/>
    <property type="match status" value="2"/>
</dbReference>
<dbReference type="PROSITE" id="PS00292">
    <property type="entry name" value="CYCLINS"/>
    <property type="match status" value="1"/>
</dbReference>
<keyword id="KW-0131">Cell cycle</keyword>
<keyword id="KW-0132">Cell division</keyword>
<keyword id="KW-0195">Cyclin</keyword>
<keyword id="KW-0498">Mitosis</keyword>
<keyword id="KW-1185">Reference proteome</keyword>
<organism>
    <name type="scientific">Arabidopsis thaliana</name>
    <name type="common">Mouse-ear cress</name>
    <dbReference type="NCBI Taxonomy" id="3702"/>
    <lineage>
        <taxon>Eukaryota</taxon>
        <taxon>Viridiplantae</taxon>
        <taxon>Streptophyta</taxon>
        <taxon>Embryophyta</taxon>
        <taxon>Tracheophyta</taxon>
        <taxon>Spermatophyta</taxon>
        <taxon>Magnoliopsida</taxon>
        <taxon>eudicotyledons</taxon>
        <taxon>Gunneridae</taxon>
        <taxon>Pentapetalae</taxon>
        <taxon>rosids</taxon>
        <taxon>malvids</taxon>
        <taxon>Brassicales</taxon>
        <taxon>Brassicaceae</taxon>
        <taxon>Camelineae</taxon>
        <taxon>Arabidopsis</taxon>
    </lineage>
</organism>
<accession>P42753</accession>
<accession>O49489</accession>
<accession>Q56XG2</accession>
<feature type="chain" id="PRO_0000080447" description="Cyclin-D3-1">
    <location>
        <begin position="1"/>
        <end position="376"/>
    </location>
</feature>
<feature type="region of interest" description="Disordered" evidence="1">
    <location>
        <begin position="298"/>
        <end position="376"/>
    </location>
</feature>
<feature type="compositionally biased region" description="Low complexity" evidence="1">
    <location>
        <begin position="321"/>
        <end position="349"/>
    </location>
</feature>
<feature type="compositionally biased region" description="Basic and acidic residues" evidence="1">
    <location>
        <begin position="354"/>
        <end position="363"/>
    </location>
</feature>
<feature type="mutagenesis site" description="Alteration of the cell cycle regulatory activity." evidence="11">
    <original>S</original>
    <variation>A</variation>
    <location>
        <position position="343"/>
    </location>
</feature>
<feature type="sequence conflict" description="In Ref. 1; CAA58287." evidence="17" ref="1">
    <original>G</original>
    <variation>C</variation>
    <location>
        <position position="288"/>
    </location>
</feature>
<gene>
    <name type="primary">CYCD3-1</name>
    <name type="synonym">CYCD3</name>
    <name type="ordered locus">At4g34160</name>
    <name type="ORF">F28A23.80</name>
</gene>
<protein>
    <recommendedName>
        <fullName>Cyclin-D3-1</fullName>
    </recommendedName>
    <alternativeName>
        <fullName>Cyclin-delta-3</fullName>
        <shortName>Cyclin-d3</shortName>
    </alternativeName>
    <alternativeName>
        <fullName>G1/S-specific cyclin-D3-1</fullName>
        <shortName>CycD3;1</shortName>
    </alternativeName>
</protein>
<name>CCD31_ARATH</name>
<reference key="1">
    <citation type="journal article" date="1995" name="Plant Cell">
        <title>A family of cyclin D homologs from plants differentially controlled by growth regulators and containing the conserved retinoblastoma protein interaction motif.</title>
        <authorList>
            <person name="Soni R."/>
            <person name="Carmichael J.P."/>
            <person name="Shah Z.H."/>
            <person name="Murray J.A.H."/>
        </authorList>
    </citation>
    <scope>NUCLEOTIDE SEQUENCE [MRNA]</scope>
    <scope>TISSUE SPECIFICITY</scope>
    <scope>INDUCTION</scope>
    <source>
        <strain>cv. Landsberg erecta</strain>
        <tissue>Seedling</tissue>
    </source>
</reference>
<reference key="2">
    <citation type="submission" date="1998-03" db="EMBL/GenBank/DDBJ databases">
        <authorList>
            <person name="Murray J.A.H."/>
        </authorList>
    </citation>
    <scope>SEQUENCE REVISION TO 371</scope>
</reference>
<reference key="3">
    <citation type="journal article" date="1999" name="Nature">
        <title>Sequence and analysis of chromosome 4 of the plant Arabidopsis thaliana.</title>
        <authorList>
            <person name="Mayer K.F.X."/>
            <person name="Schueller C."/>
            <person name="Wambutt R."/>
            <person name="Murphy G."/>
            <person name="Volckaert G."/>
            <person name="Pohl T."/>
            <person name="Duesterhoeft A."/>
            <person name="Stiekema W."/>
            <person name="Entian K.-D."/>
            <person name="Terryn N."/>
            <person name="Harris B."/>
            <person name="Ansorge W."/>
            <person name="Brandt P."/>
            <person name="Grivell L.A."/>
            <person name="Rieger M."/>
            <person name="Weichselgartner M."/>
            <person name="de Simone V."/>
            <person name="Obermaier B."/>
            <person name="Mache R."/>
            <person name="Mueller M."/>
            <person name="Kreis M."/>
            <person name="Delseny M."/>
            <person name="Puigdomenech P."/>
            <person name="Watson M."/>
            <person name="Schmidtheini T."/>
            <person name="Reichert B."/>
            <person name="Portetelle D."/>
            <person name="Perez-Alonso M."/>
            <person name="Boutry M."/>
            <person name="Bancroft I."/>
            <person name="Vos P."/>
            <person name="Hoheisel J."/>
            <person name="Zimmermann W."/>
            <person name="Wedler H."/>
            <person name="Ridley P."/>
            <person name="Langham S.-A."/>
            <person name="McCullagh B."/>
            <person name="Bilham L."/>
            <person name="Robben J."/>
            <person name="van der Schueren J."/>
            <person name="Grymonprez B."/>
            <person name="Chuang Y.-J."/>
            <person name="Vandenbussche F."/>
            <person name="Braeken M."/>
            <person name="Weltjens I."/>
            <person name="Voet M."/>
            <person name="Bastiaens I."/>
            <person name="Aert R."/>
            <person name="Defoor E."/>
            <person name="Weitzenegger T."/>
            <person name="Bothe G."/>
            <person name="Ramsperger U."/>
            <person name="Hilbert H."/>
            <person name="Braun M."/>
            <person name="Holzer E."/>
            <person name="Brandt A."/>
            <person name="Peters S."/>
            <person name="van Staveren M."/>
            <person name="Dirkse W."/>
            <person name="Mooijman P."/>
            <person name="Klein Lankhorst R."/>
            <person name="Rose M."/>
            <person name="Hauf J."/>
            <person name="Koetter P."/>
            <person name="Berneiser S."/>
            <person name="Hempel S."/>
            <person name="Feldpausch M."/>
            <person name="Lamberth S."/>
            <person name="Van den Daele H."/>
            <person name="De Keyser A."/>
            <person name="Buysshaert C."/>
            <person name="Gielen J."/>
            <person name="Villarroel R."/>
            <person name="De Clercq R."/>
            <person name="van Montagu M."/>
            <person name="Rogers J."/>
            <person name="Cronin A."/>
            <person name="Quail M.A."/>
            <person name="Bray-Allen S."/>
            <person name="Clark L."/>
            <person name="Doggett J."/>
            <person name="Hall S."/>
            <person name="Kay M."/>
            <person name="Lennard N."/>
            <person name="McLay K."/>
            <person name="Mayes R."/>
            <person name="Pettett A."/>
            <person name="Rajandream M.A."/>
            <person name="Lyne M."/>
            <person name="Benes V."/>
            <person name="Rechmann S."/>
            <person name="Borkova D."/>
            <person name="Bloecker H."/>
            <person name="Scharfe M."/>
            <person name="Grimm M."/>
            <person name="Loehnert T.-H."/>
            <person name="Dose S."/>
            <person name="de Haan M."/>
            <person name="Maarse A.C."/>
            <person name="Schaefer M."/>
            <person name="Mueller-Auer S."/>
            <person name="Gabel C."/>
            <person name="Fuchs M."/>
            <person name="Fartmann B."/>
            <person name="Granderath K."/>
            <person name="Dauner D."/>
            <person name="Herzl A."/>
            <person name="Neumann S."/>
            <person name="Argiriou A."/>
            <person name="Vitale D."/>
            <person name="Liguori R."/>
            <person name="Piravandi E."/>
            <person name="Massenet O."/>
            <person name="Quigley F."/>
            <person name="Clabauld G."/>
            <person name="Muendlein A."/>
            <person name="Felber R."/>
            <person name="Schnabl S."/>
            <person name="Hiller R."/>
            <person name="Schmidt W."/>
            <person name="Lecharny A."/>
            <person name="Aubourg S."/>
            <person name="Chefdor F."/>
            <person name="Cooke R."/>
            <person name="Berger C."/>
            <person name="Monfort A."/>
            <person name="Casacuberta E."/>
            <person name="Gibbons T."/>
            <person name="Weber N."/>
            <person name="Vandenbol M."/>
            <person name="Bargues M."/>
            <person name="Terol J."/>
            <person name="Torres A."/>
            <person name="Perez-Perez A."/>
            <person name="Purnelle B."/>
            <person name="Bent E."/>
            <person name="Johnson S."/>
            <person name="Tacon D."/>
            <person name="Jesse T."/>
            <person name="Heijnen L."/>
            <person name="Schwarz S."/>
            <person name="Scholler P."/>
            <person name="Heber S."/>
            <person name="Francs P."/>
            <person name="Bielke C."/>
            <person name="Frishman D."/>
            <person name="Haase D."/>
            <person name="Lemcke K."/>
            <person name="Mewes H.-W."/>
            <person name="Stocker S."/>
            <person name="Zaccaria P."/>
            <person name="Bevan M."/>
            <person name="Wilson R.K."/>
            <person name="de la Bastide M."/>
            <person name="Habermann K."/>
            <person name="Parnell L."/>
            <person name="Dedhia N."/>
            <person name="Gnoj L."/>
            <person name="Schutz K."/>
            <person name="Huang E."/>
            <person name="Spiegel L."/>
            <person name="Sekhon M."/>
            <person name="Murray J."/>
            <person name="Sheet P."/>
            <person name="Cordes M."/>
            <person name="Abu-Threideh J."/>
            <person name="Stoneking T."/>
            <person name="Kalicki J."/>
            <person name="Graves T."/>
            <person name="Harmon G."/>
            <person name="Edwards J."/>
            <person name="Latreille P."/>
            <person name="Courtney L."/>
            <person name="Cloud J."/>
            <person name="Abbott A."/>
            <person name="Scott K."/>
            <person name="Johnson D."/>
            <person name="Minx P."/>
            <person name="Bentley D."/>
            <person name="Fulton B."/>
            <person name="Miller N."/>
            <person name="Greco T."/>
            <person name="Kemp K."/>
            <person name="Kramer J."/>
            <person name="Fulton L."/>
            <person name="Mardis E."/>
            <person name="Dante M."/>
            <person name="Pepin K."/>
            <person name="Hillier L.W."/>
            <person name="Nelson J."/>
            <person name="Spieth J."/>
            <person name="Ryan E."/>
            <person name="Andrews S."/>
            <person name="Geisel C."/>
            <person name="Layman D."/>
            <person name="Du H."/>
            <person name="Ali J."/>
            <person name="Berghoff A."/>
            <person name="Jones K."/>
            <person name="Drone K."/>
            <person name="Cotton M."/>
            <person name="Joshu C."/>
            <person name="Antonoiu B."/>
            <person name="Zidanic M."/>
            <person name="Strong C."/>
            <person name="Sun H."/>
            <person name="Lamar B."/>
            <person name="Yordan C."/>
            <person name="Ma P."/>
            <person name="Zhong J."/>
            <person name="Preston R."/>
            <person name="Vil D."/>
            <person name="Shekher M."/>
            <person name="Matero A."/>
            <person name="Shah R."/>
            <person name="Swaby I.K."/>
            <person name="O'Shaughnessy A."/>
            <person name="Rodriguez M."/>
            <person name="Hoffman J."/>
            <person name="Till S."/>
            <person name="Granat S."/>
            <person name="Shohdy N."/>
            <person name="Hasegawa A."/>
            <person name="Hameed A."/>
            <person name="Lodhi M."/>
            <person name="Johnson A."/>
            <person name="Chen E."/>
            <person name="Marra M.A."/>
            <person name="Martienssen R."/>
            <person name="McCombie W.R."/>
        </authorList>
    </citation>
    <scope>NUCLEOTIDE SEQUENCE [LARGE SCALE GENOMIC DNA]</scope>
    <source>
        <strain>cv. Columbia</strain>
    </source>
</reference>
<reference key="4">
    <citation type="journal article" date="2017" name="Plant J.">
        <title>Araport11: a complete reannotation of the Arabidopsis thaliana reference genome.</title>
        <authorList>
            <person name="Cheng C.Y."/>
            <person name="Krishnakumar V."/>
            <person name="Chan A.P."/>
            <person name="Thibaud-Nissen F."/>
            <person name="Schobel S."/>
            <person name="Town C.D."/>
        </authorList>
    </citation>
    <scope>GENOME REANNOTATION</scope>
    <source>
        <strain>cv. Columbia</strain>
    </source>
</reference>
<reference key="5">
    <citation type="submission" date="2005-03" db="EMBL/GenBank/DDBJ databases">
        <title>Large-scale analysis of RIKEN Arabidopsis full-length (RAFL) cDNAs.</title>
        <authorList>
            <person name="Totoki Y."/>
            <person name="Seki M."/>
            <person name="Ishida J."/>
            <person name="Nakajima M."/>
            <person name="Enju A."/>
            <person name="Kamiya A."/>
            <person name="Narusaka M."/>
            <person name="Shin-i T."/>
            <person name="Nakagawa M."/>
            <person name="Sakamoto N."/>
            <person name="Oishi K."/>
            <person name="Kohara Y."/>
            <person name="Kobayashi M."/>
            <person name="Toyoda A."/>
            <person name="Sakaki Y."/>
            <person name="Sakurai T."/>
            <person name="Iida K."/>
            <person name="Akiyama K."/>
            <person name="Satou M."/>
            <person name="Toyoda T."/>
            <person name="Konagaya A."/>
            <person name="Carninci P."/>
            <person name="Kawai J."/>
            <person name="Hayashizaki Y."/>
            <person name="Shinozaki K."/>
        </authorList>
    </citation>
    <scope>NUCLEOTIDE SEQUENCE [LARGE SCALE MRNA]</scope>
    <source>
        <strain>cv. Columbia</strain>
    </source>
</reference>
<reference key="6">
    <citation type="journal article" date="1996" name="Plant Physiol.">
        <title>Modulation of cyclin transcript levels in cultured cells of Arabidopsis thaliana.</title>
        <authorList>
            <person name="Fuerst R.A.U."/>
            <person name="Soni R."/>
            <person name="Murray J.A.H."/>
            <person name="Lindsey K."/>
        </authorList>
    </citation>
    <scope>DEVELOPMENTAL STAGE</scope>
</reference>
<reference key="7">
    <citation type="journal article" date="1998" name="Plant J.">
        <title>ICK1, a cyclin-dependent protein kinase inhibitor from Arabidopsis thaliana interacts with both Cdc2a and CycD3, and its expression is induced by abscisic acid.</title>
        <authorList>
            <person name="Wang H."/>
            <person name="Qi Q."/>
            <person name="Schorr P."/>
            <person name="Cutler A.J."/>
            <person name="Crosby W.L."/>
            <person name="Fowke L.C."/>
        </authorList>
    </citation>
    <scope>INTERACTION WITH CDKA-1 AND KRP1/ICK1</scope>
</reference>
<reference key="8">
    <citation type="journal article" date="1999" name="Science">
        <title>Cytokinin activation of Arabidopsis cell division through a D-type cyclin.</title>
        <authorList>
            <person name="Riou-Khamlichi C."/>
            <person name="Huntley R."/>
            <person name="Jacqmard A."/>
            <person name="Murray J.A.H."/>
        </authorList>
    </citation>
    <scope>FUNCTION</scope>
    <scope>TISSUE SPECIFICITY</scope>
    <scope>DEVELOPMENTAL STAGE</scope>
    <scope>INDUCTION</scope>
</reference>
<reference key="9">
    <citation type="journal article" date="2000" name="Mol. Cell. Biol.">
        <title>Sugar control of the plant cell cycle: differential regulation of Arabidopsis D-type cyclin gene expression.</title>
        <authorList>
            <person name="Riou-Khamlichi C."/>
            <person name="Menges M."/>
            <person name="Healy J.M.S."/>
            <person name="Murray J.A.H."/>
        </authorList>
    </citation>
    <scope>INDUCTION</scope>
</reference>
<reference key="10">
    <citation type="journal article" date="2000" name="Plant J.">
        <title>Promotive effect of brassinosteroids on cell division involves a distinct CycD3-induction pathway in Arabidopsis.</title>
        <authorList>
            <person name="Hu Y."/>
            <person name="Bao F."/>
            <person name="Li J."/>
        </authorList>
    </citation>
    <scope>INDUCTION</scope>
</reference>
<reference key="11">
    <citation type="journal article" date="2001" name="J. Biol. Chem.">
        <title>The Arabidopsis D-type cyclins CycD2 and CycD3 both interact in vivo with the PSTAIRE cyclin-dependent kinase Cdc2a but are differentially controlled.</title>
        <authorList>
            <person name="Healy J.M.S."/>
            <person name="Menges M."/>
            <person name="Doonan J.H."/>
            <person name="Murray J.A.H."/>
        </authorList>
    </citation>
    <scope>INTERACTION WITH CDKA-1</scope>
</reference>
<reference key="12">
    <citation type="journal article" date="2002" name="Proc. Natl. Acad. Sci. U.S.A.">
        <title>Ectopic D-type cyclin expression induces not only DNA replication but also cell division in Arabidopsis trichomes.</title>
        <authorList>
            <person name="Schnittger A."/>
            <person name="Schoebinger U."/>
            <person name="Bouyer D."/>
            <person name="Weinl C."/>
            <person name="Stierhof Y.-D."/>
            <person name="Huelskamp M."/>
        </authorList>
    </citation>
    <scope>FUNCTION</scope>
</reference>
<reference key="13">
    <citation type="journal article" date="2003" name="Plant Cell">
        <title>Altered cell cycle distribution, hyperplasia, and inhibited differentiation in Arabidopsis caused by the D-type cyclin CYCD3.</title>
        <authorList>
            <person name="Dewitte W."/>
            <person name="Riou-Khamlichi C."/>
            <person name="Scofield S."/>
            <person name="Healy J.M.S."/>
            <person name="Jacqmard A."/>
            <person name="Kilby N.J."/>
            <person name="Murray J.A.H."/>
        </authorList>
    </citation>
    <scope>FUNCTION</scope>
    <scope>TISSUE SPECIFICITY</scope>
</reference>
<reference key="14">
    <citation type="journal article" date="2003" name="Plant Cell">
        <title>Misexpression of the cyclin-dependent kinase inhibitor ICK1/KRP1 in single-celled Arabidopsis trichomes reduces endoreduplication and cell size and induces cell death.</title>
        <authorList>
            <person name="Schnittger A."/>
            <person name="Weinl C."/>
            <person name="Bouyer D."/>
            <person name="Schoebinger U."/>
            <person name="Huelskamp M."/>
        </authorList>
    </citation>
    <scope>INTERACTION WITH KRP1/ICK1</scope>
</reference>
<reference key="15">
    <citation type="journal article" date="2004" name="Plant J.">
        <title>Differential stability of Arabidopsis D-type cyclins: CYCD3;1 is a highly unstable protein degraded by a proteasome-dependent mechanism.</title>
        <authorList>
            <person name="Planchais S."/>
            <person name="Samland A.K."/>
            <person name="Murray J.A.H."/>
        </authorList>
    </citation>
    <scope>INDUCTION</scope>
    <scope>PHOSPHORYLATION</scope>
</reference>
<reference key="16">
    <citation type="journal article" date="2004" name="Plant Physiol.">
        <title>Genome-wide analysis of the cyclin family in Arabidopsis and comparative phylogenetic analysis of plant cyclin-like proteins.</title>
        <authorList>
            <person name="Wang G."/>
            <person name="Kong H."/>
            <person name="Sun Y."/>
            <person name="Zhang X."/>
            <person name="Zhang W."/>
            <person name="Altman N."/>
            <person name="dePamphilis C.W."/>
            <person name="Ma H."/>
        </authorList>
    </citation>
    <scope>GENE FAMILY</scope>
    <scope>NOMENCLATURE</scope>
</reference>
<reference key="17">
    <citation type="journal article" date="2005" name="Proc. Natl. Acad. Sci. U.S.A.">
        <title>D-type cyclins activate division in the root apex to promote seed germination in Arabidopsis.</title>
        <authorList>
            <person name="Masubelele N.H."/>
            <person name="Dewitte W."/>
            <person name="Menges M."/>
            <person name="Maughan S."/>
            <person name="Collins C."/>
            <person name="Huntley R."/>
            <person name="Nieuwland J."/>
            <person name="Scofield S."/>
            <person name="Murray J.A.H."/>
        </authorList>
    </citation>
    <scope>FUNCTION</scope>
</reference>
<reference key="18">
    <citation type="journal article" date="2006" name="Plant Cell">
        <title>The D-type cyclin CYCD3;1 is limiting for the G1-to-S-phase transition in Arabidopsis.</title>
        <authorList>
            <person name="Menges M."/>
            <person name="Samland A.K."/>
            <person name="Planchais S."/>
            <person name="Murray J.A.H."/>
        </authorList>
    </citation>
    <scope>FUNCTION</scope>
    <scope>PHOSPHORYLATION</scope>
    <scope>INTERACTION WITH CDKA-1</scope>
    <scope>MUTAGENESIS OF SER-343</scope>
</reference>
<reference key="19">
    <citation type="journal article" date="2013" name="Plant J.">
        <title>Phosphorylation of p27(KIP1) homologs KRP6 and 7 by SNF1-related protein kinase-1 links plant energy homeostasis and cell proliferation.</title>
        <authorList>
            <person name="Guerinier T."/>
            <person name="Millan L."/>
            <person name="Crozet P."/>
            <person name="Oury C."/>
            <person name="Rey F."/>
            <person name="Valot B."/>
            <person name="Mathieu C."/>
            <person name="Vidal J."/>
            <person name="Hodges M."/>
            <person name="Thomas M."/>
            <person name="Glab N."/>
        </authorList>
    </citation>
    <scope>INTERACTION WITH KRP6</scope>
</reference>
<reference key="20">
    <citation type="journal article" date="2014" name="J. Exp. Bot.">
        <title>Requirement for A-type cyclin-dependent kinase and cyclins for the terminal division in the stomatal lineage of Arabidopsis.</title>
        <authorList>
            <person name="Yang K."/>
            <person name="Wang H."/>
            <person name="Xue S."/>
            <person name="Qu X."/>
            <person name="Zou J."/>
            <person name="Le J."/>
        </authorList>
    </citation>
    <scope>FUNCTION</scope>
    <source>
        <strain>cv. Columbia</strain>
    </source>
</reference>
<sequence length="376" mass="42702">MAIRKEEESREEQSNSFLLDALYCEEEKWDDEGEEVEENSSLSSSSSPFVVLQQDLFWEDEDLVTLFSKEEEQGLSCLDDVYLSTDRKEAVGWILRVNAHYGFSTLAAVLAITYLDKFICSYSLQRDKPWMLQLVSVACLSLAAKVEETQVPLLLDFQVEETKYVFEAKTIQRMELLILSTLEWKMHLITPISFVDHIIRRLGLKNNAHWDFLNKCHRLLLSVISDSRFVGYLPSVVAAATMMRIIEQVDPFDPLSYQTNLLGVLNLTKEKVKTCYDLILQLPVDRIGLQIQIQSSKKRKSHDSSSSLNSPSCVIDANPFNSDESSNDSWSASSCNPPTSSSSPQQQPPLKKMRGAEENEKKKPILHLPWAIVATP</sequence>